<protein>
    <recommendedName>
        <fullName evidence="1">Bifunctional protein FolD 3</fullName>
    </recommendedName>
    <domain>
        <recommendedName>
            <fullName evidence="1">Methylenetetrahydrofolate dehydrogenase</fullName>
            <ecNumber evidence="1">1.5.1.5</ecNumber>
        </recommendedName>
    </domain>
    <domain>
        <recommendedName>
            <fullName evidence="1">Methenyltetrahydrofolate cyclohydrolase</fullName>
            <ecNumber evidence="1">3.5.4.9</ecNumber>
        </recommendedName>
    </domain>
</protein>
<keyword id="KW-0028">Amino-acid biosynthesis</keyword>
<keyword id="KW-0368">Histidine biosynthesis</keyword>
<keyword id="KW-0378">Hydrolase</keyword>
<keyword id="KW-0486">Methionine biosynthesis</keyword>
<keyword id="KW-0511">Multifunctional enzyme</keyword>
<keyword id="KW-0521">NADP</keyword>
<keyword id="KW-0554">One-carbon metabolism</keyword>
<keyword id="KW-0560">Oxidoreductase</keyword>
<keyword id="KW-0658">Purine biosynthesis</keyword>
<feature type="chain" id="PRO_0000340589" description="Bifunctional protein FolD 3">
    <location>
        <begin position="1"/>
        <end position="307"/>
    </location>
</feature>
<feature type="binding site" evidence="1">
    <location>
        <begin position="169"/>
        <end position="171"/>
    </location>
    <ligand>
        <name>NADP(+)</name>
        <dbReference type="ChEBI" id="CHEBI:58349"/>
    </ligand>
</feature>
<feature type="binding site" evidence="1">
    <location>
        <position position="194"/>
    </location>
    <ligand>
        <name>NADP(+)</name>
        <dbReference type="ChEBI" id="CHEBI:58349"/>
    </ligand>
</feature>
<feature type="binding site" evidence="1">
    <location>
        <position position="235"/>
    </location>
    <ligand>
        <name>NADP(+)</name>
        <dbReference type="ChEBI" id="CHEBI:58349"/>
    </ligand>
</feature>
<gene>
    <name evidence="1" type="primary">folD3</name>
    <name type="ordered locus">Pmen_3471</name>
</gene>
<reference key="1">
    <citation type="submission" date="2007-04" db="EMBL/GenBank/DDBJ databases">
        <title>Complete sequence of Pseudomonas mendocina ymp.</title>
        <authorList>
            <consortium name="US DOE Joint Genome Institute"/>
            <person name="Copeland A."/>
            <person name="Lucas S."/>
            <person name="Lapidus A."/>
            <person name="Barry K."/>
            <person name="Glavina del Rio T."/>
            <person name="Dalin E."/>
            <person name="Tice H."/>
            <person name="Pitluck S."/>
            <person name="Kiss H."/>
            <person name="Brettin T."/>
            <person name="Detter J.C."/>
            <person name="Bruce D."/>
            <person name="Han C."/>
            <person name="Schmutz J."/>
            <person name="Larimer F."/>
            <person name="Land M."/>
            <person name="Hauser L."/>
            <person name="Kyrpides N."/>
            <person name="Mikhailova N."/>
            <person name="Hersman L."/>
            <person name="Dubois J."/>
            <person name="Maurice P."/>
            <person name="Richardson P."/>
        </authorList>
    </citation>
    <scope>NUCLEOTIDE SEQUENCE [LARGE SCALE GENOMIC DNA]</scope>
    <source>
        <strain>ymp</strain>
    </source>
</reference>
<accession>A4XY05</accession>
<organism>
    <name type="scientific">Ectopseudomonas mendocina (strain ymp)</name>
    <name type="common">Pseudomonas mendocina</name>
    <dbReference type="NCBI Taxonomy" id="399739"/>
    <lineage>
        <taxon>Bacteria</taxon>
        <taxon>Pseudomonadati</taxon>
        <taxon>Pseudomonadota</taxon>
        <taxon>Gammaproteobacteria</taxon>
        <taxon>Pseudomonadales</taxon>
        <taxon>Pseudomonadaceae</taxon>
        <taxon>Ectopseudomonas</taxon>
    </lineage>
</organism>
<dbReference type="EC" id="1.5.1.5" evidence="1"/>
<dbReference type="EC" id="3.5.4.9" evidence="1"/>
<dbReference type="EMBL" id="CP000680">
    <property type="protein sequence ID" value="ABP86221.1"/>
    <property type="molecule type" value="Genomic_DNA"/>
</dbReference>
<dbReference type="SMR" id="A4XY05"/>
<dbReference type="STRING" id="399739.Pmen_3471"/>
<dbReference type="KEGG" id="pmy:Pmen_3471"/>
<dbReference type="eggNOG" id="COG0190">
    <property type="taxonomic scope" value="Bacteria"/>
</dbReference>
<dbReference type="HOGENOM" id="CLU_034045_2_1_6"/>
<dbReference type="OrthoDB" id="9803580at2"/>
<dbReference type="UniPathway" id="UPA00193"/>
<dbReference type="GO" id="GO:0005829">
    <property type="term" value="C:cytosol"/>
    <property type="evidence" value="ECO:0007669"/>
    <property type="project" value="TreeGrafter"/>
</dbReference>
<dbReference type="GO" id="GO:0004477">
    <property type="term" value="F:methenyltetrahydrofolate cyclohydrolase activity"/>
    <property type="evidence" value="ECO:0007669"/>
    <property type="project" value="UniProtKB-UniRule"/>
</dbReference>
<dbReference type="GO" id="GO:0004488">
    <property type="term" value="F:methylenetetrahydrofolate dehydrogenase (NADP+) activity"/>
    <property type="evidence" value="ECO:0007669"/>
    <property type="project" value="UniProtKB-UniRule"/>
</dbReference>
<dbReference type="GO" id="GO:0000105">
    <property type="term" value="P:L-histidine biosynthetic process"/>
    <property type="evidence" value="ECO:0007669"/>
    <property type="project" value="UniProtKB-KW"/>
</dbReference>
<dbReference type="GO" id="GO:0009086">
    <property type="term" value="P:methionine biosynthetic process"/>
    <property type="evidence" value="ECO:0007669"/>
    <property type="project" value="UniProtKB-KW"/>
</dbReference>
<dbReference type="GO" id="GO:0006164">
    <property type="term" value="P:purine nucleotide biosynthetic process"/>
    <property type="evidence" value="ECO:0007669"/>
    <property type="project" value="UniProtKB-KW"/>
</dbReference>
<dbReference type="GO" id="GO:0035999">
    <property type="term" value="P:tetrahydrofolate interconversion"/>
    <property type="evidence" value="ECO:0007669"/>
    <property type="project" value="UniProtKB-UniRule"/>
</dbReference>
<dbReference type="CDD" id="cd01080">
    <property type="entry name" value="NAD_bind_m-THF_DH_Cyclohyd"/>
    <property type="match status" value="1"/>
</dbReference>
<dbReference type="FunFam" id="3.40.50.720:FF:000006">
    <property type="entry name" value="Bifunctional protein FolD"/>
    <property type="match status" value="1"/>
</dbReference>
<dbReference type="FunFam" id="3.40.50.10860:FF:000005">
    <property type="entry name" value="C-1-tetrahydrofolate synthase, cytoplasmic, putative"/>
    <property type="match status" value="1"/>
</dbReference>
<dbReference type="Gene3D" id="3.40.50.10860">
    <property type="entry name" value="Leucine Dehydrogenase, chain A, domain 1"/>
    <property type="match status" value="1"/>
</dbReference>
<dbReference type="Gene3D" id="3.40.50.720">
    <property type="entry name" value="NAD(P)-binding Rossmann-like Domain"/>
    <property type="match status" value="1"/>
</dbReference>
<dbReference type="HAMAP" id="MF_01576">
    <property type="entry name" value="THF_DHG_CYH"/>
    <property type="match status" value="1"/>
</dbReference>
<dbReference type="InterPro" id="IPR046346">
    <property type="entry name" value="Aminoacid_DH-like_N_sf"/>
</dbReference>
<dbReference type="InterPro" id="IPR036291">
    <property type="entry name" value="NAD(P)-bd_dom_sf"/>
</dbReference>
<dbReference type="InterPro" id="IPR000672">
    <property type="entry name" value="THF_DH/CycHdrlase"/>
</dbReference>
<dbReference type="InterPro" id="IPR020630">
    <property type="entry name" value="THF_DH/CycHdrlase_cat_dom"/>
</dbReference>
<dbReference type="InterPro" id="IPR020867">
    <property type="entry name" value="THF_DH/CycHdrlase_CS"/>
</dbReference>
<dbReference type="InterPro" id="IPR020631">
    <property type="entry name" value="THF_DH/CycHdrlase_NAD-bd_dom"/>
</dbReference>
<dbReference type="NCBIfam" id="NF008058">
    <property type="entry name" value="PRK10792.1"/>
    <property type="match status" value="1"/>
</dbReference>
<dbReference type="NCBIfam" id="NF010783">
    <property type="entry name" value="PRK14186.1"/>
    <property type="match status" value="1"/>
</dbReference>
<dbReference type="NCBIfam" id="NF010785">
    <property type="entry name" value="PRK14188.1"/>
    <property type="match status" value="1"/>
</dbReference>
<dbReference type="NCBIfam" id="NF010790">
    <property type="entry name" value="PRK14194.1"/>
    <property type="match status" value="1"/>
</dbReference>
<dbReference type="PANTHER" id="PTHR48099:SF5">
    <property type="entry name" value="C-1-TETRAHYDROFOLATE SYNTHASE, CYTOPLASMIC"/>
    <property type="match status" value="1"/>
</dbReference>
<dbReference type="PANTHER" id="PTHR48099">
    <property type="entry name" value="C-1-TETRAHYDROFOLATE SYNTHASE, CYTOPLASMIC-RELATED"/>
    <property type="match status" value="1"/>
</dbReference>
<dbReference type="Pfam" id="PF00763">
    <property type="entry name" value="THF_DHG_CYH"/>
    <property type="match status" value="1"/>
</dbReference>
<dbReference type="Pfam" id="PF02882">
    <property type="entry name" value="THF_DHG_CYH_C"/>
    <property type="match status" value="1"/>
</dbReference>
<dbReference type="PRINTS" id="PR00085">
    <property type="entry name" value="THFDHDRGNASE"/>
</dbReference>
<dbReference type="SUPFAM" id="SSF53223">
    <property type="entry name" value="Aminoacid dehydrogenase-like, N-terminal domain"/>
    <property type="match status" value="1"/>
</dbReference>
<dbReference type="SUPFAM" id="SSF51735">
    <property type="entry name" value="NAD(P)-binding Rossmann-fold domains"/>
    <property type="match status" value="1"/>
</dbReference>
<dbReference type="PROSITE" id="PS00767">
    <property type="entry name" value="THF_DHG_CYH_2"/>
    <property type="match status" value="1"/>
</dbReference>
<sequence length="307" mass="32153">MNTQAPIKLIDGKAAAARVLAEVAEDVRALKAAGIVPALAVVLVGDDPASQVYVRNKVLRAEECGIRSLEFKLPADTAEARLQALIAELNADASVHGILVQLPLPAHIDEQRVLQAVTPLKDVDGFHAENVGGLSQGREVLTPCTPAGCLRLLQDSCGDLTGKHAVVIGRSNIVGKPMAALLLKAHCSVTVVHSKSANLKTLCRQADIVVAAVGRPRLVDADWLKPGAVVIDVGINRIDENGRSRLVGDVDFDSALPQVSAITPVPGGVGPMTIAYLMKNTLVAARLQQTAPSNLTQRAEAACPSIS</sequence>
<comment type="function">
    <text evidence="1">Catalyzes the oxidation of 5,10-methylenetetrahydrofolate to 5,10-methenyltetrahydrofolate and then the hydrolysis of 5,10-methenyltetrahydrofolate to 10-formyltetrahydrofolate.</text>
</comment>
<comment type="catalytic activity">
    <reaction evidence="1">
        <text>(6R)-5,10-methylene-5,6,7,8-tetrahydrofolate + NADP(+) = (6R)-5,10-methenyltetrahydrofolate + NADPH</text>
        <dbReference type="Rhea" id="RHEA:22812"/>
        <dbReference type="ChEBI" id="CHEBI:15636"/>
        <dbReference type="ChEBI" id="CHEBI:57455"/>
        <dbReference type="ChEBI" id="CHEBI:57783"/>
        <dbReference type="ChEBI" id="CHEBI:58349"/>
        <dbReference type="EC" id="1.5.1.5"/>
    </reaction>
</comment>
<comment type="catalytic activity">
    <reaction evidence="1">
        <text>(6R)-5,10-methenyltetrahydrofolate + H2O = (6R)-10-formyltetrahydrofolate + H(+)</text>
        <dbReference type="Rhea" id="RHEA:23700"/>
        <dbReference type="ChEBI" id="CHEBI:15377"/>
        <dbReference type="ChEBI" id="CHEBI:15378"/>
        <dbReference type="ChEBI" id="CHEBI:57455"/>
        <dbReference type="ChEBI" id="CHEBI:195366"/>
        <dbReference type="EC" id="3.5.4.9"/>
    </reaction>
</comment>
<comment type="pathway">
    <text evidence="1">One-carbon metabolism; tetrahydrofolate interconversion.</text>
</comment>
<comment type="subunit">
    <text evidence="1">Homodimer.</text>
</comment>
<comment type="similarity">
    <text evidence="1">Belongs to the tetrahydrofolate dehydrogenase/cyclohydrolase family.</text>
</comment>
<evidence type="ECO:0000255" key="1">
    <source>
        <dbReference type="HAMAP-Rule" id="MF_01576"/>
    </source>
</evidence>
<proteinExistence type="inferred from homology"/>
<name>FOLD3_ECTM1</name>